<dbReference type="EMBL" id="CP000305">
    <property type="protein sequence ID" value="ABG19640.1"/>
    <property type="molecule type" value="Genomic_DNA"/>
</dbReference>
<dbReference type="EMBL" id="ACNQ01000017">
    <property type="protein sequence ID" value="EEO75827.1"/>
    <property type="molecule type" value="Genomic_DNA"/>
</dbReference>
<dbReference type="RefSeq" id="WP_002209135.1">
    <property type="nucleotide sequence ID" value="NZ_ACNQ01000017.1"/>
</dbReference>
<dbReference type="SMR" id="Q1CEE0"/>
<dbReference type="GeneID" id="57974250"/>
<dbReference type="KEGG" id="ypn:YPN_3313"/>
<dbReference type="HOGENOM" id="CLU_156492_0_0_6"/>
<dbReference type="Proteomes" id="UP000008936">
    <property type="component" value="Chromosome"/>
</dbReference>
<dbReference type="GO" id="GO:0045283">
    <property type="term" value="C:fumarate reductase complex"/>
    <property type="evidence" value="ECO:0007669"/>
    <property type="project" value="UniProtKB-UniRule"/>
</dbReference>
<dbReference type="GO" id="GO:0005886">
    <property type="term" value="C:plasma membrane"/>
    <property type="evidence" value="ECO:0007669"/>
    <property type="project" value="UniProtKB-SubCell"/>
</dbReference>
<dbReference type="GO" id="GO:0000104">
    <property type="term" value="F:succinate dehydrogenase activity"/>
    <property type="evidence" value="ECO:0007669"/>
    <property type="project" value="UniProtKB-UniRule"/>
</dbReference>
<dbReference type="CDD" id="cd00546">
    <property type="entry name" value="QFR_TypeD_subunitC"/>
    <property type="match status" value="1"/>
</dbReference>
<dbReference type="Gene3D" id="1.20.1300.10">
    <property type="entry name" value="Fumarate reductase/succinate dehydrogenase, transmembrane subunit"/>
    <property type="match status" value="1"/>
</dbReference>
<dbReference type="HAMAP" id="MF_00708">
    <property type="entry name" value="Fumarate_red_C"/>
    <property type="match status" value="1"/>
</dbReference>
<dbReference type="InterPro" id="IPR003510">
    <property type="entry name" value="Fumarate_red_C"/>
</dbReference>
<dbReference type="InterPro" id="IPR034804">
    <property type="entry name" value="SQR/QFR_C/D"/>
</dbReference>
<dbReference type="NCBIfam" id="NF003445">
    <property type="entry name" value="PRK04987.1"/>
    <property type="match status" value="1"/>
</dbReference>
<dbReference type="Pfam" id="PF02300">
    <property type="entry name" value="Fumarate_red_C"/>
    <property type="match status" value="1"/>
</dbReference>
<dbReference type="PIRSF" id="PIRSF000180">
    <property type="entry name" value="FrdC"/>
    <property type="match status" value="1"/>
</dbReference>
<dbReference type="SUPFAM" id="SSF81343">
    <property type="entry name" value="Fumarate reductase respiratory complex transmembrane subunits"/>
    <property type="match status" value="1"/>
</dbReference>
<protein>
    <recommendedName>
        <fullName evidence="1">Fumarate reductase subunit C</fullName>
    </recommendedName>
    <alternativeName>
        <fullName evidence="1">Fumarate reductase 15 kDa hydrophobic protein</fullName>
    </alternativeName>
    <alternativeName>
        <fullName evidence="1">Quinol-fumarate reductase subunit C</fullName>
        <shortName evidence="1">QFR subunit C</shortName>
    </alternativeName>
</protein>
<comment type="function">
    <text evidence="1">Two distinct, membrane-bound, FAD-containing enzymes are responsible for the catalysis of fumarate and succinate interconversion; fumarate reductase is used in anaerobic growth, and succinate dehydrogenase is used in aerobic growth. Anchors the catalytic components of the fumarate reductase complex to the cell inner membrane, binds quinones.</text>
</comment>
<comment type="subunit">
    <text evidence="1">Part of an enzyme complex containing four subunits: a flavoprotein (FrdA), an iron-sulfur protein (FrdB), and two hydrophobic anchor proteins (FrdC and FrdD).</text>
</comment>
<comment type="subcellular location">
    <subcellularLocation>
        <location evidence="1">Cell inner membrane</location>
        <topology evidence="1">Multi-pass membrane protein</topology>
    </subcellularLocation>
</comment>
<comment type="similarity">
    <text evidence="1">Belongs to the FrdC family.</text>
</comment>
<sequence length="130" mass="14679">MTTKRKAYVRTMAPNWWQQLGFYRFYMLREGTSIPAVWFSVLLIYGVFALKSGPAGWEGFVSFLQNPLVLFLNILTLFAALLHTKTWFELAPKAVNIIVKSEKMGPEPMIKALWVVTVVASAIILAVALL</sequence>
<feature type="chain" id="PRO_1000045540" description="Fumarate reductase subunit C">
    <location>
        <begin position="1"/>
        <end position="130"/>
    </location>
</feature>
<feature type="transmembrane region" description="Helical" evidence="1">
    <location>
        <begin position="30"/>
        <end position="50"/>
    </location>
</feature>
<feature type="transmembrane region" description="Helical" evidence="1">
    <location>
        <begin position="60"/>
        <end position="80"/>
    </location>
</feature>
<feature type="transmembrane region" description="Helical" evidence="1">
    <location>
        <begin position="110"/>
        <end position="130"/>
    </location>
</feature>
<name>FRDC_YERPN</name>
<reference key="1">
    <citation type="journal article" date="2006" name="J. Bacteriol.">
        <title>Complete genome sequence of Yersinia pestis strains Antiqua and Nepal516: evidence of gene reduction in an emerging pathogen.</title>
        <authorList>
            <person name="Chain P.S.G."/>
            <person name="Hu P."/>
            <person name="Malfatti S.A."/>
            <person name="Radnedge L."/>
            <person name="Larimer F."/>
            <person name="Vergez L.M."/>
            <person name="Worsham P."/>
            <person name="Chu M.C."/>
            <person name="Andersen G.L."/>
        </authorList>
    </citation>
    <scope>NUCLEOTIDE SEQUENCE [LARGE SCALE GENOMIC DNA]</scope>
    <source>
        <strain>Nepal516</strain>
    </source>
</reference>
<reference key="2">
    <citation type="submission" date="2009-04" db="EMBL/GenBank/DDBJ databases">
        <title>Yersinia pestis Nepal516A whole genome shotgun sequencing project.</title>
        <authorList>
            <person name="Plunkett G. III"/>
            <person name="Anderson B.D."/>
            <person name="Baumler D.J."/>
            <person name="Burland V."/>
            <person name="Cabot E.L."/>
            <person name="Glasner J.D."/>
            <person name="Mau B."/>
            <person name="Neeno-Eckwall E."/>
            <person name="Perna N.T."/>
            <person name="Munk A.C."/>
            <person name="Tapia R."/>
            <person name="Green L.D."/>
            <person name="Rogers Y.C."/>
            <person name="Detter J.C."/>
            <person name="Bruce D.C."/>
            <person name="Brettin T.S."/>
        </authorList>
    </citation>
    <scope>NUCLEOTIDE SEQUENCE [LARGE SCALE GENOMIC DNA]</scope>
    <source>
        <strain>Nepal516</strain>
    </source>
</reference>
<keyword id="KW-0997">Cell inner membrane</keyword>
<keyword id="KW-1003">Cell membrane</keyword>
<keyword id="KW-0472">Membrane</keyword>
<keyword id="KW-0812">Transmembrane</keyword>
<keyword id="KW-1133">Transmembrane helix</keyword>
<organism>
    <name type="scientific">Yersinia pestis bv. Antiqua (strain Nepal516)</name>
    <dbReference type="NCBI Taxonomy" id="377628"/>
    <lineage>
        <taxon>Bacteria</taxon>
        <taxon>Pseudomonadati</taxon>
        <taxon>Pseudomonadota</taxon>
        <taxon>Gammaproteobacteria</taxon>
        <taxon>Enterobacterales</taxon>
        <taxon>Yersiniaceae</taxon>
        <taxon>Yersinia</taxon>
    </lineage>
</organism>
<proteinExistence type="inferred from homology"/>
<evidence type="ECO:0000255" key="1">
    <source>
        <dbReference type="HAMAP-Rule" id="MF_00708"/>
    </source>
</evidence>
<gene>
    <name evidence="1" type="primary">frdC</name>
    <name type="ordered locus">YPN_3313</name>
    <name type="ORF">YP516_3765</name>
</gene>
<accession>Q1CEE0</accession>
<accession>C4GY27</accession>